<gene>
    <name type="primary">EBNA2</name>
    <name type="ORF">BYRF1</name>
</gene>
<feature type="chain" id="PRO_0000375934" description="Epstein-Barr nuclear antigen 2">
    <location>
        <begin position="1"/>
        <end position="454"/>
    </location>
</feature>
<feature type="region of interest" description="Disordered" evidence="3">
    <location>
        <begin position="55"/>
        <end position="98"/>
    </location>
</feature>
<feature type="region of interest" description="Disordered" evidence="3">
    <location>
        <begin position="175"/>
        <end position="454"/>
    </location>
</feature>
<feature type="short sequence motif" description="PXLXP motif, interaction with host ZMYND11" evidence="1">
    <location>
        <begin position="350"/>
        <end position="354"/>
    </location>
</feature>
<feature type="short sequence motif" description="PXLXP motif, interaction with host ZMYND11" evidence="1">
    <location>
        <begin position="404"/>
        <end position="408"/>
    </location>
</feature>
<feature type="compositionally biased region" description="Pro residues" evidence="3">
    <location>
        <begin position="59"/>
        <end position="73"/>
    </location>
</feature>
<feature type="compositionally biased region" description="Pro residues" evidence="3">
    <location>
        <begin position="177"/>
        <end position="189"/>
    </location>
</feature>
<feature type="compositionally biased region" description="Low complexity" evidence="3">
    <location>
        <begin position="190"/>
        <end position="203"/>
    </location>
</feature>
<feature type="compositionally biased region" description="Pro residues" evidence="3">
    <location>
        <begin position="258"/>
        <end position="269"/>
    </location>
</feature>
<feature type="compositionally biased region" description="Pro residues" evidence="3">
    <location>
        <begin position="281"/>
        <end position="294"/>
    </location>
</feature>
<feature type="compositionally biased region" description="Low complexity" evidence="3">
    <location>
        <begin position="295"/>
        <end position="306"/>
    </location>
</feature>
<feature type="compositionally biased region" description="Basic residues" evidence="3">
    <location>
        <begin position="317"/>
        <end position="332"/>
    </location>
</feature>
<feature type="compositionally biased region" description="Polar residues" evidence="3">
    <location>
        <begin position="359"/>
        <end position="368"/>
    </location>
</feature>
<proteinExistence type="inferred from homology"/>
<organism>
    <name type="scientific">Epstein-Barr virus (strain AG876)</name>
    <name type="common">HHV-4</name>
    <name type="synonym">Human herpesvirus 4</name>
    <dbReference type="NCBI Taxonomy" id="82830"/>
    <lineage>
        <taxon>Viruses</taxon>
        <taxon>Duplodnaviria</taxon>
        <taxon>Heunggongvirae</taxon>
        <taxon>Peploviricota</taxon>
        <taxon>Herviviricetes</taxon>
        <taxon>Herpesvirales</taxon>
        <taxon>Orthoherpesviridae</taxon>
        <taxon>Gammaherpesvirinae</taxon>
        <taxon>Lymphocryptovirus</taxon>
        <taxon>Lymphocryptovirus humangamma4</taxon>
        <taxon>Epstein-Barr virus (strain GD1)</taxon>
    </lineage>
</organism>
<comment type="function">
    <text evidence="2">Plays a key role in the activation of the host resting B-cell and stimulation of B-cell proliferation. Acts by up-regulating the expression of viral EBNA1-6, LMP1, LMP2A and LMP2B genes, as well as several host genes including CD21, CD23 and MYC. Activates transcription by acting as an adapter molecule that binds to cellular sequence-specific DNA-binding proteins such as host CBF1, SMARCB1 and SPI1. Once EBNA2 is near promoter sites, its acidic activating domain recruits basal and activation-associated transcription factors TFIIB, TAF40, TFIIH components ERCC2 and ERCC3, and CBP in order to promote transcription. Alternatively, EBNA2 can affect activities of cell cycle regulators and retard cell cycle progression at G2/M phase. It also induces chromosomal instability, by disrupting mitotic checkpoints, multi-nucleation and formation of micronuclei in infected cells (By similarity).</text>
</comment>
<comment type="subunit">
    <text evidence="2">Interacts with human SMARCB1/INI1, presumably generating an open chromatin conformation at the EBNA2-responsive target genes. Interacts with human WAPL. Interacts with host CBF1; this interaction allows transcriptional activation by EBNA2. Interacts with host general transcription factors GTF2B, ERCC2 and ERCC3. Interacts (via PXLXP motif) with host ZMYND11/BS69 (via MYND-type zinc finger). Interacts with host EBF1 (By similarity).</text>
</comment>
<comment type="subcellular location">
    <subcellularLocation>
        <location>Host nucleus matrix</location>
    </subcellularLocation>
    <text evidence="1">Associated with the nuclear matrix.</text>
</comment>
<comment type="PTM">
    <text evidence="1">Phosphorylated.</text>
</comment>
<comment type="similarity">
    <text evidence="4">Belongs to the herpesviridae EBNA2 family.</text>
</comment>
<dbReference type="EMBL" id="K03332">
    <property type="protein sequence ID" value="AAA45902.1"/>
    <property type="molecule type" value="Genomic_DNA"/>
</dbReference>
<dbReference type="EMBL" id="DQ279927">
    <property type="protein sequence ID" value="ABB89222.1"/>
    <property type="molecule type" value="Genomic_DNA"/>
</dbReference>
<dbReference type="RefSeq" id="YP_001129441.1">
    <property type="nucleotide sequence ID" value="NC_009334.1"/>
</dbReference>
<dbReference type="SASBDB" id="Q69022"/>
<dbReference type="SMR" id="Q69022"/>
<dbReference type="IntAct" id="Q69022">
    <property type="interactions" value="8"/>
</dbReference>
<dbReference type="KEGG" id="vg:5176198"/>
<dbReference type="Proteomes" id="UP000007639">
    <property type="component" value="Genome"/>
</dbReference>
<dbReference type="GO" id="GO:0044204">
    <property type="term" value="C:host cell nuclear matrix"/>
    <property type="evidence" value="ECO:0007669"/>
    <property type="project" value="UniProtKB-SubCell"/>
</dbReference>
<dbReference type="GO" id="GO:0004865">
    <property type="term" value="F:protein serine/threonine phosphatase inhibitor activity"/>
    <property type="evidence" value="ECO:0007669"/>
    <property type="project" value="UniProtKB-KW"/>
</dbReference>
<dbReference type="GO" id="GO:0044071">
    <property type="term" value="P:symbiont-mediated perturbation of host cell cycle progression"/>
    <property type="evidence" value="ECO:0007669"/>
    <property type="project" value="UniProtKB-KW"/>
</dbReference>
<dbReference type="GO" id="GO:0052170">
    <property type="term" value="P:symbiont-mediated suppression of host innate immune response"/>
    <property type="evidence" value="ECO:0007669"/>
    <property type="project" value="UniProtKB-KW"/>
</dbReference>
<dbReference type="GO" id="GO:0039606">
    <property type="term" value="P:symbiont-mediated suppression of host translation initiation"/>
    <property type="evidence" value="ECO:0007669"/>
    <property type="project" value="UniProtKB-KW"/>
</dbReference>
<dbReference type="GO" id="GO:0039502">
    <property type="term" value="P:symbiont-mediated suppression of host type I interferon-mediated signaling pathway"/>
    <property type="evidence" value="ECO:0007669"/>
    <property type="project" value="UniProtKB-KW"/>
</dbReference>
<sequence>MPTYYLALHGGQSYNLIVDTDMSGNPSLSVIPTNPYQEQLSNNPLIQLQIVVGENTGAPAPPQPPPPPPPPPPPERRDAWTQEPLPLDMNPLGSDASQGPLASSIRMLCMAQYLLRNARGQQGLLRPLGPQTRSQVTLERQPVHNPRQEAPIILLQSPAPPRFTPVPMVALGHTLQPTPPPRPTLPQPRIPLIIPPRHTNQPATTPPTAPQRLTLGHQLSLPPHPPPHQSTPHCSSDSTGLPPPPTSYSIPSMTLSPEPLPPPAAPAHPLPGVIYDQQALPPTPGPPWWPPVRDPTPTTQTPPTNTKQGPDQGQGRGRWRGRGRSKGRGRMHKLPEPRRPGPDTSSPSMPQLSPVVSLHQGQGPENSPTPGPSTAGPVCRVTPSATPDISPIHEPESSDSEEPPFLFPSDWYPPTLEPAELDESWEGIFETTESHSSDEENVGGPSKRPRTSTQ</sequence>
<organismHost>
    <name type="scientific">Homo sapiens</name>
    <name type="common">Human</name>
    <dbReference type="NCBI Taxonomy" id="9606"/>
</organismHost>
<accession>Q69022</accession>
<protein>
    <recommendedName>
        <fullName>Epstein-Barr nuclear antigen 2</fullName>
        <shortName>EBNA-2</shortName>
        <shortName>EBV nuclear antigen 2</shortName>
    </recommendedName>
</protein>
<keyword id="KW-0010">Activator</keyword>
<keyword id="KW-1048">Host nucleus</keyword>
<keyword id="KW-0945">Host-virus interaction</keyword>
<keyword id="KW-1090">Inhibition of host innate immune response by virus</keyword>
<keyword id="KW-1114">Inhibition of host interferon signaling pathway by virus</keyword>
<keyword id="KW-0922">Interferon antiviral system evasion</keyword>
<keyword id="KW-1121">Modulation of host cell cycle by virus</keyword>
<keyword id="KW-1126">Modulation of host PP1 activity by virus</keyword>
<keyword id="KW-0597">Phosphoprotein</keyword>
<keyword id="KW-1185">Reference proteome</keyword>
<keyword id="KW-0804">Transcription</keyword>
<keyword id="KW-0805">Transcription regulation</keyword>
<keyword id="KW-0899">Viral immunoevasion</keyword>
<evidence type="ECO:0000250" key="1"/>
<evidence type="ECO:0000250" key="2">
    <source>
        <dbReference type="UniProtKB" id="P12978"/>
    </source>
</evidence>
<evidence type="ECO:0000256" key="3">
    <source>
        <dbReference type="SAM" id="MobiDB-lite"/>
    </source>
</evidence>
<evidence type="ECO:0000305" key="4"/>
<name>EBNA2_EBVA8</name>
<reference key="1">
    <citation type="journal article" date="1984" name="Proc. Natl. Acad. Sci. U.S.A.">
        <title>U2 region of Epstein-Barr virus DNA may encode Epstein-Barr nuclear antigen 2.</title>
        <authorList>
            <person name="Dambaugh T."/>
            <person name="Hennessy K."/>
            <person name="Chamnankit L."/>
            <person name="Kieff E."/>
        </authorList>
    </citation>
    <scope>NUCLEOTIDE SEQUENCE [GENOMIC DNA]</scope>
</reference>
<reference key="2">
    <citation type="journal article" date="2006" name="Virology">
        <title>The genome of Epstein-Barr virus type 2 strain AG876.</title>
        <authorList>
            <person name="Dolan A."/>
            <person name="Addison C."/>
            <person name="Gatherer D."/>
            <person name="Davison A.J."/>
            <person name="McGeoch D.J."/>
        </authorList>
    </citation>
    <scope>NUCLEOTIDE SEQUENCE [LARGE SCALE GENOMIC DNA]</scope>
</reference>